<proteinExistence type="inferred from homology"/>
<sequence>MLTIADKTFQSRLFTGTGKFANKHLMASAIEASGSQLATMALKRVDIRSEQDDILQPIIDAGVNLLPNTSGAKNAKDAIFAAHLAREALGTNWLKLEIHPDPKYLMPDPIETLKAAEQLVKDGFVVLPYCHADPVLCKRLEEVGCAAVMPLGAPIGSNKGIASADFLEIIIDQANVPVIVDAGIGAPSHAARAMEMGADAVLVNTAIAASQQPVEMAIAFKLAVEAGRMAYLAGLAGKVSHAVASSPLTSFLDE</sequence>
<feature type="chain" id="PRO_1000196913" description="Thiazole synthase">
    <location>
        <begin position="1"/>
        <end position="254"/>
    </location>
</feature>
<feature type="active site" description="Schiff-base intermediate with DXP" evidence="1">
    <location>
        <position position="95"/>
    </location>
</feature>
<feature type="binding site" evidence="1">
    <location>
        <position position="156"/>
    </location>
    <ligand>
        <name>1-deoxy-D-xylulose 5-phosphate</name>
        <dbReference type="ChEBI" id="CHEBI:57792"/>
    </ligand>
</feature>
<feature type="binding site" evidence="1">
    <location>
        <begin position="182"/>
        <end position="183"/>
    </location>
    <ligand>
        <name>1-deoxy-D-xylulose 5-phosphate</name>
        <dbReference type="ChEBI" id="CHEBI:57792"/>
    </ligand>
</feature>
<feature type="binding site" evidence="1">
    <location>
        <begin position="204"/>
        <end position="205"/>
    </location>
    <ligand>
        <name>1-deoxy-D-xylulose 5-phosphate</name>
        <dbReference type="ChEBI" id="CHEBI:57792"/>
    </ligand>
</feature>
<gene>
    <name evidence="1" type="primary">thiG</name>
    <name type="ordered locus">VS_3094</name>
</gene>
<accession>B7VMV3</accession>
<dbReference type="EC" id="2.8.1.10" evidence="1"/>
<dbReference type="EMBL" id="FM954972">
    <property type="protein sequence ID" value="CAV20361.1"/>
    <property type="molecule type" value="Genomic_DNA"/>
</dbReference>
<dbReference type="SMR" id="B7VMV3"/>
<dbReference type="STRING" id="575788.VS_3094"/>
<dbReference type="KEGG" id="vsp:VS_3094"/>
<dbReference type="PATRIC" id="fig|575788.5.peg.4270"/>
<dbReference type="eggNOG" id="COG2022">
    <property type="taxonomic scope" value="Bacteria"/>
</dbReference>
<dbReference type="HOGENOM" id="CLU_062233_1_0_6"/>
<dbReference type="UniPathway" id="UPA00060"/>
<dbReference type="Proteomes" id="UP000009100">
    <property type="component" value="Chromosome 1"/>
</dbReference>
<dbReference type="GO" id="GO:0005737">
    <property type="term" value="C:cytoplasm"/>
    <property type="evidence" value="ECO:0007669"/>
    <property type="project" value="UniProtKB-SubCell"/>
</dbReference>
<dbReference type="GO" id="GO:1990107">
    <property type="term" value="F:thiazole synthase activity"/>
    <property type="evidence" value="ECO:0007669"/>
    <property type="project" value="UniProtKB-EC"/>
</dbReference>
<dbReference type="GO" id="GO:0009229">
    <property type="term" value="P:thiamine diphosphate biosynthetic process"/>
    <property type="evidence" value="ECO:0007669"/>
    <property type="project" value="UniProtKB-UniRule"/>
</dbReference>
<dbReference type="CDD" id="cd04728">
    <property type="entry name" value="ThiG"/>
    <property type="match status" value="1"/>
</dbReference>
<dbReference type="FunFam" id="3.20.20.70:FF:000049">
    <property type="entry name" value="Thiazole synthase"/>
    <property type="match status" value="1"/>
</dbReference>
<dbReference type="Gene3D" id="3.20.20.70">
    <property type="entry name" value="Aldolase class I"/>
    <property type="match status" value="1"/>
</dbReference>
<dbReference type="HAMAP" id="MF_00443">
    <property type="entry name" value="ThiG"/>
    <property type="match status" value="1"/>
</dbReference>
<dbReference type="InterPro" id="IPR013785">
    <property type="entry name" value="Aldolase_TIM"/>
</dbReference>
<dbReference type="InterPro" id="IPR033983">
    <property type="entry name" value="Thiazole_synthase_ThiG"/>
</dbReference>
<dbReference type="InterPro" id="IPR008867">
    <property type="entry name" value="ThiG"/>
</dbReference>
<dbReference type="PANTHER" id="PTHR34266">
    <property type="entry name" value="THIAZOLE SYNTHASE"/>
    <property type="match status" value="1"/>
</dbReference>
<dbReference type="PANTHER" id="PTHR34266:SF2">
    <property type="entry name" value="THIAZOLE SYNTHASE"/>
    <property type="match status" value="1"/>
</dbReference>
<dbReference type="Pfam" id="PF05690">
    <property type="entry name" value="ThiG"/>
    <property type="match status" value="1"/>
</dbReference>
<dbReference type="SUPFAM" id="SSF110399">
    <property type="entry name" value="ThiG-like"/>
    <property type="match status" value="1"/>
</dbReference>
<keyword id="KW-0963">Cytoplasm</keyword>
<keyword id="KW-0704">Schiff base</keyword>
<keyword id="KW-0784">Thiamine biosynthesis</keyword>
<keyword id="KW-0808">Transferase</keyword>
<organism>
    <name type="scientific">Vibrio atlanticus (strain LGP32)</name>
    <name type="common">Vibrio splendidus (strain Mel32)</name>
    <dbReference type="NCBI Taxonomy" id="575788"/>
    <lineage>
        <taxon>Bacteria</taxon>
        <taxon>Pseudomonadati</taxon>
        <taxon>Pseudomonadota</taxon>
        <taxon>Gammaproteobacteria</taxon>
        <taxon>Vibrionales</taxon>
        <taxon>Vibrionaceae</taxon>
        <taxon>Vibrio</taxon>
    </lineage>
</organism>
<reference key="1">
    <citation type="submission" date="2009-02" db="EMBL/GenBank/DDBJ databases">
        <title>Vibrio splendidus str. LGP32 complete genome.</title>
        <authorList>
            <person name="Mazel D."/>
            <person name="Le Roux F."/>
        </authorList>
    </citation>
    <scope>NUCLEOTIDE SEQUENCE [LARGE SCALE GENOMIC DNA]</scope>
    <source>
        <strain>LGP32</strain>
    </source>
</reference>
<comment type="function">
    <text evidence="1">Catalyzes the rearrangement of 1-deoxy-D-xylulose 5-phosphate (DXP) to produce the thiazole phosphate moiety of thiamine. Sulfur is provided by the thiocarboxylate moiety of the carrier protein ThiS. In vitro, sulfur can be provided by H(2)S.</text>
</comment>
<comment type="catalytic activity">
    <reaction evidence="1">
        <text>[ThiS sulfur-carrier protein]-C-terminal-Gly-aminoethanethioate + 2-iminoacetate + 1-deoxy-D-xylulose 5-phosphate = [ThiS sulfur-carrier protein]-C-terminal Gly-Gly + 2-[(2R,5Z)-2-carboxy-4-methylthiazol-5(2H)-ylidene]ethyl phosphate + 2 H2O + H(+)</text>
        <dbReference type="Rhea" id="RHEA:26297"/>
        <dbReference type="Rhea" id="RHEA-COMP:12909"/>
        <dbReference type="Rhea" id="RHEA-COMP:19908"/>
        <dbReference type="ChEBI" id="CHEBI:15377"/>
        <dbReference type="ChEBI" id="CHEBI:15378"/>
        <dbReference type="ChEBI" id="CHEBI:57792"/>
        <dbReference type="ChEBI" id="CHEBI:62899"/>
        <dbReference type="ChEBI" id="CHEBI:77846"/>
        <dbReference type="ChEBI" id="CHEBI:90778"/>
        <dbReference type="ChEBI" id="CHEBI:232372"/>
        <dbReference type="EC" id="2.8.1.10"/>
    </reaction>
</comment>
<comment type="pathway">
    <text evidence="1">Cofactor biosynthesis; thiamine diphosphate biosynthesis.</text>
</comment>
<comment type="subunit">
    <text evidence="1">Homotetramer. Forms heterodimers with either ThiH or ThiS.</text>
</comment>
<comment type="subcellular location">
    <subcellularLocation>
        <location evidence="1">Cytoplasm</location>
    </subcellularLocation>
</comment>
<comment type="similarity">
    <text evidence="1">Belongs to the ThiG family.</text>
</comment>
<protein>
    <recommendedName>
        <fullName evidence="1">Thiazole synthase</fullName>
        <ecNumber evidence="1">2.8.1.10</ecNumber>
    </recommendedName>
</protein>
<name>THIG_VIBA3</name>
<evidence type="ECO:0000255" key="1">
    <source>
        <dbReference type="HAMAP-Rule" id="MF_00443"/>
    </source>
</evidence>